<keyword id="KW-0963">Cytoplasm</keyword>
<keyword id="KW-0251">Elongation factor</keyword>
<keyword id="KW-0648">Protein biosynthesis</keyword>
<gene>
    <name evidence="1" type="primary">efp</name>
    <name type="ordered locus">BCB4264_A4307</name>
</gene>
<reference key="1">
    <citation type="submission" date="2008-10" db="EMBL/GenBank/DDBJ databases">
        <title>Genome sequence of Bacillus cereus B4264.</title>
        <authorList>
            <person name="Dodson R.J."/>
            <person name="Durkin A.S."/>
            <person name="Rosovitz M.J."/>
            <person name="Rasko D.A."/>
            <person name="Hoffmaster A."/>
            <person name="Ravel J."/>
            <person name="Sutton G."/>
        </authorList>
    </citation>
    <scope>NUCLEOTIDE SEQUENCE [LARGE SCALE GENOMIC DNA]</scope>
    <source>
        <strain>B4264</strain>
    </source>
</reference>
<sequence>MISVNDFRTGLTISVDNALWQVLDFQHVKPGKGAAFVRSKLRNLRTGSVQEKTFRAGEKVEKAHIENRRMQYLYASGEAHVFMDNGTYEQIELGEKQIERELKFLKENMEVAIMTYQGEVLGVELPNTVELQVTETEPGIKGDTASNVTKPATLETGLVVQVPIFINEGEMLIINTGEGKYVSRA</sequence>
<organism>
    <name type="scientific">Bacillus cereus (strain B4264)</name>
    <dbReference type="NCBI Taxonomy" id="405532"/>
    <lineage>
        <taxon>Bacteria</taxon>
        <taxon>Bacillati</taxon>
        <taxon>Bacillota</taxon>
        <taxon>Bacilli</taxon>
        <taxon>Bacillales</taxon>
        <taxon>Bacillaceae</taxon>
        <taxon>Bacillus</taxon>
        <taxon>Bacillus cereus group</taxon>
    </lineage>
</organism>
<feature type="chain" id="PRO_1000117886" description="Elongation factor P">
    <location>
        <begin position="1"/>
        <end position="185"/>
    </location>
</feature>
<evidence type="ECO:0000255" key="1">
    <source>
        <dbReference type="HAMAP-Rule" id="MF_00141"/>
    </source>
</evidence>
<protein>
    <recommendedName>
        <fullName evidence="1">Elongation factor P</fullName>
        <shortName evidence="1">EF-P</shortName>
    </recommendedName>
</protein>
<accession>B7HB68</accession>
<comment type="function">
    <text evidence="1">Involved in peptide bond synthesis. Stimulates efficient translation and peptide-bond synthesis on native or reconstituted 70S ribosomes in vitro. Probably functions indirectly by altering the affinity of the ribosome for aminoacyl-tRNA, thus increasing their reactivity as acceptors for peptidyl transferase.</text>
</comment>
<comment type="pathway">
    <text evidence="1">Protein biosynthesis; polypeptide chain elongation.</text>
</comment>
<comment type="subcellular location">
    <subcellularLocation>
        <location evidence="1">Cytoplasm</location>
    </subcellularLocation>
</comment>
<comment type="similarity">
    <text evidence="1">Belongs to the elongation factor P family.</text>
</comment>
<proteinExistence type="inferred from homology"/>
<name>EFP_BACC4</name>
<dbReference type="EMBL" id="CP001176">
    <property type="protein sequence ID" value="ACK61216.1"/>
    <property type="molecule type" value="Genomic_DNA"/>
</dbReference>
<dbReference type="RefSeq" id="WP_000626516.1">
    <property type="nucleotide sequence ID" value="NZ_VEHB01000002.1"/>
</dbReference>
<dbReference type="SMR" id="B7HB68"/>
<dbReference type="KEGG" id="bcb:BCB4264_A4307"/>
<dbReference type="HOGENOM" id="CLU_074944_0_1_9"/>
<dbReference type="UniPathway" id="UPA00345"/>
<dbReference type="Proteomes" id="UP000007096">
    <property type="component" value="Chromosome"/>
</dbReference>
<dbReference type="GO" id="GO:0005737">
    <property type="term" value="C:cytoplasm"/>
    <property type="evidence" value="ECO:0007669"/>
    <property type="project" value="UniProtKB-SubCell"/>
</dbReference>
<dbReference type="GO" id="GO:0003746">
    <property type="term" value="F:translation elongation factor activity"/>
    <property type="evidence" value="ECO:0007669"/>
    <property type="project" value="UniProtKB-UniRule"/>
</dbReference>
<dbReference type="GO" id="GO:0043043">
    <property type="term" value="P:peptide biosynthetic process"/>
    <property type="evidence" value="ECO:0007669"/>
    <property type="project" value="InterPro"/>
</dbReference>
<dbReference type="CDD" id="cd04470">
    <property type="entry name" value="S1_EF-P_repeat_1"/>
    <property type="match status" value="1"/>
</dbReference>
<dbReference type="CDD" id="cd05794">
    <property type="entry name" value="S1_EF-P_repeat_2"/>
    <property type="match status" value="1"/>
</dbReference>
<dbReference type="FunFam" id="2.30.30.30:FF:000010">
    <property type="entry name" value="Elongation factor P"/>
    <property type="match status" value="1"/>
</dbReference>
<dbReference type="FunFam" id="2.40.50.140:FF:000004">
    <property type="entry name" value="Elongation factor P"/>
    <property type="match status" value="1"/>
</dbReference>
<dbReference type="FunFam" id="2.40.50.140:FF:000009">
    <property type="entry name" value="Elongation factor P"/>
    <property type="match status" value="1"/>
</dbReference>
<dbReference type="Gene3D" id="2.30.30.30">
    <property type="match status" value="1"/>
</dbReference>
<dbReference type="Gene3D" id="2.40.50.140">
    <property type="entry name" value="Nucleic acid-binding proteins"/>
    <property type="match status" value="2"/>
</dbReference>
<dbReference type="HAMAP" id="MF_00141">
    <property type="entry name" value="EF_P"/>
    <property type="match status" value="1"/>
</dbReference>
<dbReference type="InterPro" id="IPR015365">
    <property type="entry name" value="Elong-fact-P_C"/>
</dbReference>
<dbReference type="InterPro" id="IPR012340">
    <property type="entry name" value="NA-bd_OB-fold"/>
</dbReference>
<dbReference type="InterPro" id="IPR014722">
    <property type="entry name" value="Rib_uL2_dom2"/>
</dbReference>
<dbReference type="InterPro" id="IPR020599">
    <property type="entry name" value="Transl_elong_fac_P/YeiP"/>
</dbReference>
<dbReference type="InterPro" id="IPR013185">
    <property type="entry name" value="Transl_elong_KOW-like"/>
</dbReference>
<dbReference type="InterPro" id="IPR001059">
    <property type="entry name" value="Transl_elong_P/YeiP_cen"/>
</dbReference>
<dbReference type="InterPro" id="IPR013852">
    <property type="entry name" value="Transl_elong_P/YeiP_CS"/>
</dbReference>
<dbReference type="InterPro" id="IPR011768">
    <property type="entry name" value="Transl_elongation_fac_P"/>
</dbReference>
<dbReference type="InterPro" id="IPR008991">
    <property type="entry name" value="Translation_prot_SH3-like_sf"/>
</dbReference>
<dbReference type="NCBIfam" id="TIGR00038">
    <property type="entry name" value="efp"/>
    <property type="match status" value="1"/>
</dbReference>
<dbReference type="NCBIfam" id="NF001810">
    <property type="entry name" value="PRK00529.1"/>
    <property type="match status" value="1"/>
</dbReference>
<dbReference type="PANTHER" id="PTHR30053">
    <property type="entry name" value="ELONGATION FACTOR P"/>
    <property type="match status" value="1"/>
</dbReference>
<dbReference type="PANTHER" id="PTHR30053:SF12">
    <property type="entry name" value="ELONGATION FACTOR P (EF-P) FAMILY PROTEIN"/>
    <property type="match status" value="1"/>
</dbReference>
<dbReference type="Pfam" id="PF01132">
    <property type="entry name" value="EFP"/>
    <property type="match status" value="1"/>
</dbReference>
<dbReference type="Pfam" id="PF08207">
    <property type="entry name" value="EFP_N"/>
    <property type="match status" value="1"/>
</dbReference>
<dbReference type="Pfam" id="PF09285">
    <property type="entry name" value="Elong-fact-P_C"/>
    <property type="match status" value="1"/>
</dbReference>
<dbReference type="PIRSF" id="PIRSF005901">
    <property type="entry name" value="EF-P"/>
    <property type="match status" value="1"/>
</dbReference>
<dbReference type="SMART" id="SM01185">
    <property type="entry name" value="EFP"/>
    <property type="match status" value="1"/>
</dbReference>
<dbReference type="SMART" id="SM00841">
    <property type="entry name" value="Elong-fact-P_C"/>
    <property type="match status" value="1"/>
</dbReference>
<dbReference type="SUPFAM" id="SSF50249">
    <property type="entry name" value="Nucleic acid-binding proteins"/>
    <property type="match status" value="2"/>
</dbReference>
<dbReference type="SUPFAM" id="SSF50104">
    <property type="entry name" value="Translation proteins SH3-like domain"/>
    <property type="match status" value="1"/>
</dbReference>
<dbReference type="PROSITE" id="PS01275">
    <property type="entry name" value="EFP"/>
    <property type="match status" value="1"/>
</dbReference>